<sequence>MIKVGIVGGTGYTGVELLRLLAQHPQAEVAVITSRSEAGVAVADMYPNLRGHYDGLTFSVPDSKTLGACDVVFFATPHGVAHALAGELLAAGTKVIDLSADFRLQDAAEWGKWYGQPHGAPELLKDAVYGLPEVNREKIRQARLIAVPGCYPTATQLGFLPLLEAGLADPARLIADCKSGVSGAGRGAAVGSLFCEAGESMKAYAVKGHRHLPEISQGLRLAAGKDVGLTFVPHLTPMIRGIHATLYATVADTSVDLQALFEKRYANEPFVDVMPAGSHPETRSVRGANVCRIAVHRPQGGDLVVVLSVIDNLVKGASGQAVQNLNILFGLDERMGLAHAGLLP</sequence>
<name>ARGC_PSEE4</name>
<dbReference type="EC" id="1.2.1.38" evidence="1"/>
<dbReference type="EMBL" id="CT573326">
    <property type="protein sequence ID" value="CAK13414.1"/>
    <property type="molecule type" value="Genomic_DNA"/>
</dbReference>
<dbReference type="RefSeq" id="WP_011531871.1">
    <property type="nucleotide sequence ID" value="NC_008027.1"/>
</dbReference>
<dbReference type="SMR" id="Q1IFY8"/>
<dbReference type="STRING" id="384676.PSEEN0460"/>
<dbReference type="GeneID" id="32803794"/>
<dbReference type="KEGG" id="pen:PSEEN0460"/>
<dbReference type="eggNOG" id="COG0002">
    <property type="taxonomic scope" value="Bacteria"/>
</dbReference>
<dbReference type="HOGENOM" id="CLU_006384_0_1_6"/>
<dbReference type="OrthoDB" id="9801289at2"/>
<dbReference type="UniPathway" id="UPA00068">
    <property type="reaction ID" value="UER00108"/>
</dbReference>
<dbReference type="Proteomes" id="UP000000658">
    <property type="component" value="Chromosome"/>
</dbReference>
<dbReference type="GO" id="GO:0005737">
    <property type="term" value="C:cytoplasm"/>
    <property type="evidence" value="ECO:0007669"/>
    <property type="project" value="UniProtKB-SubCell"/>
</dbReference>
<dbReference type="GO" id="GO:0003942">
    <property type="term" value="F:N-acetyl-gamma-glutamyl-phosphate reductase activity"/>
    <property type="evidence" value="ECO:0007669"/>
    <property type="project" value="UniProtKB-UniRule"/>
</dbReference>
<dbReference type="GO" id="GO:0051287">
    <property type="term" value="F:NAD binding"/>
    <property type="evidence" value="ECO:0007669"/>
    <property type="project" value="InterPro"/>
</dbReference>
<dbReference type="GO" id="GO:0070401">
    <property type="term" value="F:NADP+ binding"/>
    <property type="evidence" value="ECO:0007669"/>
    <property type="project" value="InterPro"/>
</dbReference>
<dbReference type="GO" id="GO:0006526">
    <property type="term" value="P:L-arginine biosynthetic process"/>
    <property type="evidence" value="ECO:0007669"/>
    <property type="project" value="UniProtKB-UniRule"/>
</dbReference>
<dbReference type="CDD" id="cd23934">
    <property type="entry name" value="AGPR_1_C"/>
    <property type="match status" value="1"/>
</dbReference>
<dbReference type="CDD" id="cd17895">
    <property type="entry name" value="AGPR_1_N"/>
    <property type="match status" value="1"/>
</dbReference>
<dbReference type="FunFam" id="3.30.360.10:FF:000014">
    <property type="entry name" value="N-acetyl-gamma-glutamyl-phosphate reductase"/>
    <property type="match status" value="1"/>
</dbReference>
<dbReference type="Gene3D" id="3.30.360.10">
    <property type="entry name" value="Dihydrodipicolinate Reductase, domain 2"/>
    <property type="match status" value="1"/>
</dbReference>
<dbReference type="Gene3D" id="3.40.50.720">
    <property type="entry name" value="NAD(P)-binding Rossmann-like Domain"/>
    <property type="match status" value="1"/>
</dbReference>
<dbReference type="HAMAP" id="MF_00150">
    <property type="entry name" value="ArgC_type1"/>
    <property type="match status" value="1"/>
</dbReference>
<dbReference type="InterPro" id="IPR023013">
    <property type="entry name" value="AGPR_AS"/>
</dbReference>
<dbReference type="InterPro" id="IPR000706">
    <property type="entry name" value="AGPR_type-1"/>
</dbReference>
<dbReference type="InterPro" id="IPR036291">
    <property type="entry name" value="NAD(P)-bd_dom_sf"/>
</dbReference>
<dbReference type="InterPro" id="IPR050085">
    <property type="entry name" value="NAGSA_dehydrogenase"/>
</dbReference>
<dbReference type="InterPro" id="IPR000534">
    <property type="entry name" value="Semialdehyde_DH_NAD-bd"/>
</dbReference>
<dbReference type="NCBIfam" id="TIGR01850">
    <property type="entry name" value="argC"/>
    <property type="match status" value="1"/>
</dbReference>
<dbReference type="PANTHER" id="PTHR32338:SF10">
    <property type="entry name" value="N-ACETYL-GAMMA-GLUTAMYL-PHOSPHATE REDUCTASE, CHLOROPLASTIC-RELATED"/>
    <property type="match status" value="1"/>
</dbReference>
<dbReference type="PANTHER" id="PTHR32338">
    <property type="entry name" value="N-ACETYL-GAMMA-GLUTAMYL-PHOSPHATE REDUCTASE, CHLOROPLASTIC-RELATED-RELATED"/>
    <property type="match status" value="1"/>
</dbReference>
<dbReference type="Pfam" id="PF01118">
    <property type="entry name" value="Semialdhyde_dh"/>
    <property type="match status" value="1"/>
</dbReference>
<dbReference type="Pfam" id="PF22698">
    <property type="entry name" value="Semialdhyde_dhC_1"/>
    <property type="match status" value="1"/>
</dbReference>
<dbReference type="SMART" id="SM00859">
    <property type="entry name" value="Semialdhyde_dh"/>
    <property type="match status" value="1"/>
</dbReference>
<dbReference type="SUPFAM" id="SSF55347">
    <property type="entry name" value="Glyceraldehyde-3-phosphate dehydrogenase-like, C-terminal domain"/>
    <property type="match status" value="1"/>
</dbReference>
<dbReference type="SUPFAM" id="SSF51735">
    <property type="entry name" value="NAD(P)-binding Rossmann-fold domains"/>
    <property type="match status" value="1"/>
</dbReference>
<dbReference type="PROSITE" id="PS01224">
    <property type="entry name" value="ARGC"/>
    <property type="match status" value="1"/>
</dbReference>
<keyword id="KW-0028">Amino-acid biosynthesis</keyword>
<keyword id="KW-0055">Arginine biosynthesis</keyword>
<keyword id="KW-0963">Cytoplasm</keyword>
<keyword id="KW-0521">NADP</keyword>
<keyword id="KW-0560">Oxidoreductase</keyword>
<accession>Q1IFY8</accession>
<gene>
    <name evidence="1" type="primary">argC</name>
    <name type="ordered locus">PSEEN0460</name>
</gene>
<feature type="chain" id="PRO_1000011041" description="N-acetyl-gamma-glutamyl-phosphate reductase">
    <location>
        <begin position="1"/>
        <end position="344"/>
    </location>
</feature>
<feature type="active site" evidence="1">
    <location>
        <position position="150"/>
    </location>
</feature>
<evidence type="ECO:0000255" key="1">
    <source>
        <dbReference type="HAMAP-Rule" id="MF_00150"/>
    </source>
</evidence>
<comment type="function">
    <text evidence="1">Catalyzes the NADPH-dependent reduction of N-acetyl-5-glutamyl phosphate to yield N-acetyl-L-glutamate 5-semialdehyde.</text>
</comment>
<comment type="catalytic activity">
    <reaction evidence="1">
        <text>N-acetyl-L-glutamate 5-semialdehyde + phosphate + NADP(+) = N-acetyl-L-glutamyl 5-phosphate + NADPH + H(+)</text>
        <dbReference type="Rhea" id="RHEA:21588"/>
        <dbReference type="ChEBI" id="CHEBI:15378"/>
        <dbReference type="ChEBI" id="CHEBI:29123"/>
        <dbReference type="ChEBI" id="CHEBI:43474"/>
        <dbReference type="ChEBI" id="CHEBI:57783"/>
        <dbReference type="ChEBI" id="CHEBI:57936"/>
        <dbReference type="ChEBI" id="CHEBI:58349"/>
        <dbReference type="EC" id="1.2.1.38"/>
    </reaction>
</comment>
<comment type="pathway">
    <text evidence="1">Amino-acid biosynthesis; L-arginine biosynthesis; N(2)-acetyl-L-ornithine from L-glutamate: step 3/4.</text>
</comment>
<comment type="subcellular location">
    <subcellularLocation>
        <location evidence="1">Cytoplasm</location>
    </subcellularLocation>
</comment>
<comment type="similarity">
    <text evidence="1">Belongs to the NAGSA dehydrogenase family. Type 1 subfamily.</text>
</comment>
<organism>
    <name type="scientific">Pseudomonas entomophila (strain L48)</name>
    <dbReference type="NCBI Taxonomy" id="384676"/>
    <lineage>
        <taxon>Bacteria</taxon>
        <taxon>Pseudomonadati</taxon>
        <taxon>Pseudomonadota</taxon>
        <taxon>Gammaproteobacteria</taxon>
        <taxon>Pseudomonadales</taxon>
        <taxon>Pseudomonadaceae</taxon>
        <taxon>Pseudomonas</taxon>
    </lineage>
</organism>
<reference key="1">
    <citation type="journal article" date="2006" name="Nat. Biotechnol.">
        <title>Complete genome sequence of the entomopathogenic and metabolically versatile soil bacterium Pseudomonas entomophila.</title>
        <authorList>
            <person name="Vodovar N."/>
            <person name="Vallenet D."/>
            <person name="Cruveiller S."/>
            <person name="Rouy Z."/>
            <person name="Barbe V."/>
            <person name="Acosta C."/>
            <person name="Cattolico L."/>
            <person name="Jubin C."/>
            <person name="Lajus A."/>
            <person name="Segurens B."/>
            <person name="Vacherie B."/>
            <person name="Wincker P."/>
            <person name="Weissenbach J."/>
            <person name="Lemaitre B."/>
            <person name="Medigue C."/>
            <person name="Boccard F."/>
        </authorList>
    </citation>
    <scope>NUCLEOTIDE SEQUENCE [LARGE SCALE GENOMIC DNA]</scope>
    <source>
        <strain>L48</strain>
    </source>
</reference>
<protein>
    <recommendedName>
        <fullName evidence="1">N-acetyl-gamma-glutamyl-phosphate reductase</fullName>
        <shortName evidence="1">AGPR</shortName>
        <ecNumber evidence="1">1.2.1.38</ecNumber>
    </recommendedName>
    <alternativeName>
        <fullName evidence="1">N-acetyl-glutamate semialdehyde dehydrogenase</fullName>
        <shortName evidence="1">NAGSA dehydrogenase</shortName>
    </alternativeName>
</protein>
<proteinExistence type="inferred from homology"/>